<name>2SSE_BRANA</name>
<sequence length="186" mass="21013">MANKLFLVSATLALFFLLTNASVYRTVVEVDEDDATNPAGPFRIPKCRKEFQQAQHLRACQQWLHKQAMQPGGGSGPSWTLDGEFDFEDDVENQQQGPQQRPPPPQQCCNELHQEEPLCVCPTLKGASKAVRQQVRQQQGQQMQGQQMQQVISRVYQTATHLPRVCNIRQVSICPFQKTMPGPGFY</sequence>
<proteinExistence type="evidence at transcript level"/>
<reference key="1">
    <citation type="journal article" date="1987" name="J. Biol. Chem.">
        <title>Nucleotide sequence of a member of the napin storage protein family from Brassica napus.</title>
        <authorList>
            <person name="Scofield S.R."/>
            <person name="Crouch M.L."/>
        </authorList>
    </citation>
    <scope>NUCLEOTIDE SEQUENCE [GENOMIC DNA]</scope>
</reference>
<protein>
    <recommendedName>
        <fullName>Napin embryo-specific</fullName>
    </recommendedName>
    <alternativeName>
        <fullName>1.7S seed storage protein</fullName>
    </alternativeName>
    <component>
        <recommendedName>
            <fullName>Napin embryo-specific small chain</fullName>
        </recommendedName>
    </component>
    <component>
        <recommendedName>
            <fullName>Napin embryo-specific large chain</fullName>
        </recommendedName>
    </component>
</protein>
<keyword id="KW-1015">Disulfide bond</keyword>
<keyword id="KW-0708">Seed storage protein</keyword>
<keyword id="KW-0732">Signal</keyword>
<keyword id="KW-0758">Storage protein</keyword>
<accession>P09893</accession>
<organism>
    <name type="scientific">Brassica napus</name>
    <name type="common">Rape</name>
    <dbReference type="NCBI Taxonomy" id="3708"/>
    <lineage>
        <taxon>Eukaryota</taxon>
        <taxon>Viridiplantae</taxon>
        <taxon>Streptophyta</taxon>
        <taxon>Embryophyta</taxon>
        <taxon>Tracheophyta</taxon>
        <taxon>Spermatophyta</taxon>
        <taxon>Magnoliopsida</taxon>
        <taxon>eudicotyledons</taxon>
        <taxon>Gunneridae</taxon>
        <taxon>Pentapetalae</taxon>
        <taxon>rosids</taxon>
        <taxon>malvids</taxon>
        <taxon>Brassicales</taxon>
        <taxon>Brassicaceae</taxon>
        <taxon>Brassiceae</taxon>
        <taxon>Brassica</taxon>
    </lineage>
</organism>
<comment type="function">
    <text>The small, basic, water-soluble napins are one of the two major kinds of storage proteins synthesized in the seed during its maturation.</text>
</comment>
<comment type="subunit">
    <text>The mature protein consists of a small and a large chain linked by disulfide bonds.</text>
</comment>
<comment type="tissue specificity">
    <text>Cotyledons and the axis.</text>
</comment>
<comment type="developmental stage">
    <text>Embryo.</text>
</comment>
<comment type="similarity">
    <text evidence="1">Belongs to the 2S seed storage albumins family.</text>
</comment>
<feature type="signal peptide">
    <location>
        <begin position="1"/>
        <end position="21"/>
    </location>
</feature>
<feature type="propeptide" id="PRO_0000032127">
    <location>
        <begin position="22"/>
        <end position="38"/>
    </location>
</feature>
<feature type="chain" id="PRO_0000032128" description="Napin embryo-specific small chain">
    <location>
        <begin position="39"/>
        <end position="76"/>
    </location>
</feature>
<feature type="propeptide" id="PRO_0000032129">
    <location>
        <begin position="77"/>
        <end position="97"/>
    </location>
</feature>
<feature type="chain" id="PRO_0000032130" description="Napin embryo-specific large chain">
    <location>
        <begin position="98"/>
        <end position="186"/>
    </location>
</feature>
<evidence type="ECO:0000305" key="1"/>
<dbReference type="EMBL" id="J02782">
    <property type="protein sequence ID" value="AAA33007.1"/>
    <property type="molecule type" value="Genomic_DNA"/>
</dbReference>
<dbReference type="PIR" id="A29802">
    <property type="entry name" value="A29802"/>
</dbReference>
<dbReference type="SMR" id="P09893"/>
<dbReference type="GO" id="GO:0045735">
    <property type="term" value="F:nutrient reservoir activity"/>
    <property type="evidence" value="ECO:0007669"/>
    <property type="project" value="UniProtKB-KW"/>
</dbReference>
<dbReference type="Gene3D" id="1.10.110.10">
    <property type="entry name" value="Plant lipid-transfer and hydrophobic proteins"/>
    <property type="match status" value="1"/>
</dbReference>
<dbReference type="InterPro" id="IPR036312">
    <property type="entry name" value="Bifun_inhib/LTP/seed_sf"/>
</dbReference>
<dbReference type="InterPro" id="IPR016140">
    <property type="entry name" value="Bifunc_inhib/LTP/seed_store"/>
</dbReference>
<dbReference type="InterPro" id="IPR000617">
    <property type="entry name" value="Napin/2SS/CON"/>
</dbReference>
<dbReference type="PANTHER" id="PTHR35496">
    <property type="entry name" value="2S SEED STORAGE PROTEIN 1-RELATED"/>
    <property type="match status" value="1"/>
</dbReference>
<dbReference type="PANTHER" id="PTHR35496:SF17">
    <property type="entry name" value="BIFUNCTIONAL INHIBITOR_PLANT LIPID TRANSFER PROTEIN_SEED STORAGE HELICAL DOMAIN-CONTAINING PROTEIN"/>
    <property type="match status" value="1"/>
</dbReference>
<dbReference type="Pfam" id="PF00234">
    <property type="entry name" value="Tryp_alpha_amyl"/>
    <property type="match status" value="1"/>
</dbReference>
<dbReference type="PRINTS" id="PR00496">
    <property type="entry name" value="NAPIN"/>
</dbReference>
<dbReference type="SMART" id="SM00499">
    <property type="entry name" value="AAI"/>
    <property type="match status" value="1"/>
</dbReference>
<dbReference type="SUPFAM" id="SSF47699">
    <property type="entry name" value="Bifunctional inhibitor/lipid-transfer protein/seed storage 2S albumin"/>
    <property type="match status" value="1"/>
</dbReference>